<gene>
    <name evidence="1" type="primary">rpsQ</name>
    <name type="ordered locus">NE0410</name>
</gene>
<name>RS17_NITEU</name>
<protein>
    <recommendedName>
        <fullName evidence="1">Small ribosomal subunit protein uS17</fullName>
    </recommendedName>
    <alternativeName>
        <fullName evidence="2">30S ribosomal protein S17</fullName>
    </alternativeName>
</protein>
<dbReference type="EMBL" id="AL954747">
    <property type="protein sequence ID" value="CAD84321.1"/>
    <property type="molecule type" value="Genomic_DNA"/>
</dbReference>
<dbReference type="RefSeq" id="WP_011111045.1">
    <property type="nucleotide sequence ID" value="NC_004757.1"/>
</dbReference>
<dbReference type="SMR" id="Q82X80"/>
<dbReference type="STRING" id="228410.NE0410"/>
<dbReference type="GeneID" id="87103619"/>
<dbReference type="KEGG" id="neu:NE0410"/>
<dbReference type="eggNOG" id="COG0186">
    <property type="taxonomic scope" value="Bacteria"/>
</dbReference>
<dbReference type="HOGENOM" id="CLU_073626_1_1_4"/>
<dbReference type="OrthoDB" id="9811714at2"/>
<dbReference type="PhylomeDB" id="Q82X80"/>
<dbReference type="Proteomes" id="UP000001416">
    <property type="component" value="Chromosome"/>
</dbReference>
<dbReference type="GO" id="GO:0022627">
    <property type="term" value="C:cytosolic small ribosomal subunit"/>
    <property type="evidence" value="ECO:0007669"/>
    <property type="project" value="TreeGrafter"/>
</dbReference>
<dbReference type="GO" id="GO:0019843">
    <property type="term" value="F:rRNA binding"/>
    <property type="evidence" value="ECO:0007669"/>
    <property type="project" value="UniProtKB-UniRule"/>
</dbReference>
<dbReference type="GO" id="GO:0003735">
    <property type="term" value="F:structural constituent of ribosome"/>
    <property type="evidence" value="ECO:0007669"/>
    <property type="project" value="InterPro"/>
</dbReference>
<dbReference type="GO" id="GO:0006412">
    <property type="term" value="P:translation"/>
    <property type="evidence" value="ECO:0007669"/>
    <property type="project" value="UniProtKB-UniRule"/>
</dbReference>
<dbReference type="CDD" id="cd00364">
    <property type="entry name" value="Ribosomal_uS17"/>
    <property type="match status" value="1"/>
</dbReference>
<dbReference type="Gene3D" id="2.40.50.140">
    <property type="entry name" value="Nucleic acid-binding proteins"/>
    <property type="match status" value="1"/>
</dbReference>
<dbReference type="HAMAP" id="MF_01345_B">
    <property type="entry name" value="Ribosomal_uS17_B"/>
    <property type="match status" value="1"/>
</dbReference>
<dbReference type="InterPro" id="IPR012340">
    <property type="entry name" value="NA-bd_OB-fold"/>
</dbReference>
<dbReference type="InterPro" id="IPR000266">
    <property type="entry name" value="Ribosomal_uS17"/>
</dbReference>
<dbReference type="InterPro" id="IPR019984">
    <property type="entry name" value="Ribosomal_uS17_bact/chlr"/>
</dbReference>
<dbReference type="NCBIfam" id="NF004123">
    <property type="entry name" value="PRK05610.1"/>
    <property type="match status" value="1"/>
</dbReference>
<dbReference type="NCBIfam" id="TIGR03635">
    <property type="entry name" value="uS17_bact"/>
    <property type="match status" value="1"/>
</dbReference>
<dbReference type="PANTHER" id="PTHR10744">
    <property type="entry name" value="40S RIBOSOMAL PROTEIN S11 FAMILY MEMBER"/>
    <property type="match status" value="1"/>
</dbReference>
<dbReference type="PANTHER" id="PTHR10744:SF1">
    <property type="entry name" value="SMALL RIBOSOMAL SUBUNIT PROTEIN US17M"/>
    <property type="match status" value="1"/>
</dbReference>
<dbReference type="Pfam" id="PF00366">
    <property type="entry name" value="Ribosomal_S17"/>
    <property type="match status" value="1"/>
</dbReference>
<dbReference type="PRINTS" id="PR00973">
    <property type="entry name" value="RIBOSOMALS17"/>
</dbReference>
<dbReference type="SUPFAM" id="SSF50249">
    <property type="entry name" value="Nucleic acid-binding proteins"/>
    <property type="match status" value="1"/>
</dbReference>
<organism>
    <name type="scientific">Nitrosomonas europaea (strain ATCC 19718 / CIP 103999 / KCTC 2705 / NBRC 14298)</name>
    <dbReference type="NCBI Taxonomy" id="228410"/>
    <lineage>
        <taxon>Bacteria</taxon>
        <taxon>Pseudomonadati</taxon>
        <taxon>Pseudomonadota</taxon>
        <taxon>Betaproteobacteria</taxon>
        <taxon>Nitrosomonadales</taxon>
        <taxon>Nitrosomonadaceae</taxon>
        <taxon>Nitrosomonas</taxon>
    </lineage>
</organism>
<proteinExistence type="inferred from homology"/>
<comment type="function">
    <text evidence="1">One of the primary rRNA binding proteins, it binds specifically to the 5'-end of 16S ribosomal RNA.</text>
</comment>
<comment type="subunit">
    <text evidence="1">Part of the 30S ribosomal subunit.</text>
</comment>
<comment type="similarity">
    <text evidence="1">Belongs to the universal ribosomal protein uS17 family.</text>
</comment>
<reference key="1">
    <citation type="journal article" date="2003" name="J. Bacteriol.">
        <title>Complete genome sequence of the ammonia-oxidizing bacterium and obligate chemolithoautotroph Nitrosomonas europaea.</title>
        <authorList>
            <person name="Chain P."/>
            <person name="Lamerdin J.E."/>
            <person name="Larimer F.W."/>
            <person name="Regala W."/>
            <person name="Lao V."/>
            <person name="Land M.L."/>
            <person name="Hauser L."/>
            <person name="Hooper A.B."/>
            <person name="Klotz M.G."/>
            <person name="Norton J."/>
            <person name="Sayavedra-Soto L.A."/>
            <person name="Arciero D.M."/>
            <person name="Hommes N.G."/>
            <person name="Whittaker M.M."/>
            <person name="Arp D.J."/>
        </authorList>
    </citation>
    <scope>NUCLEOTIDE SEQUENCE [LARGE SCALE GENOMIC DNA]</scope>
    <source>
        <strain>ATCC 19718 / CIP 103999 / KCTC 2705 / NBRC 14298</strain>
    </source>
</reference>
<sequence>MSSDNQSKTLIGQVVSDKRDKTVTVRIDRKVKHPLYGKIVTRSSKYHAHDELNQYKLGDIVAISETRPKSKTKAWQVVRVIKVN</sequence>
<accession>Q82X80</accession>
<feature type="chain" id="PRO_0000233521" description="Small ribosomal subunit protein uS17">
    <location>
        <begin position="1"/>
        <end position="84"/>
    </location>
</feature>
<keyword id="KW-1185">Reference proteome</keyword>
<keyword id="KW-0687">Ribonucleoprotein</keyword>
<keyword id="KW-0689">Ribosomal protein</keyword>
<keyword id="KW-0694">RNA-binding</keyword>
<keyword id="KW-0699">rRNA-binding</keyword>
<evidence type="ECO:0000255" key="1">
    <source>
        <dbReference type="HAMAP-Rule" id="MF_01345"/>
    </source>
</evidence>
<evidence type="ECO:0000305" key="2"/>